<accession>P47424</accession>
<name>RL17_MYCGE</name>
<gene>
    <name evidence="1" type="primary">rplQ</name>
    <name evidence="1" type="synonym">rpl17</name>
    <name type="ordered locus">MG178</name>
</gene>
<protein>
    <recommendedName>
        <fullName evidence="1">Large ribosomal subunit protein bL17</fullName>
    </recommendedName>
    <alternativeName>
        <fullName evidence="2">50S ribosomal protein L17</fullName>
    </alternativeName>
</protein>
<comment type="subunit">
    <text evidence="1">Part of the 50S ribosomal subunit. Contacts protein L32.</text>
</comment>
<comment type="similarity">
    <text evidence="1">Belongs to the bacterial ribosomal protein bL17 family.</text>
</comment>
<evidence type="ECO:0000255" key="1">
    <source>
        <dbReference type="HAMAP-Rule" id="MF_01368"/>
    </source>
</evidence>
<evidence type="ECO:0000305" key="2"/>
<proteinExistence type="inferred from homology"/>
<reference key="1">
    <citation type="journal article" date="1995" name="Science">
        <title>The minimal gene complement of Mycoplasma genitalium.</title>
        <authorList>
            <person name="Fraser C.M."/>
            <person name="Gocayne J.D."/>
            <person name="White O."/>
            <person name="Adams M.D."/>
            <person name="Clayton R.A."/>
            <person name="Fleischmann R.D."/>
            <person name="Bult C.J."/>
            <person name="Kerlavage A.R."/>
            <person name="Sutton G.G."/>
            <person name="Kelley J.M."/>
            <person name="Fritchman J.L."/>
            <person name="Weidman J.F."/>
            <person name="Small K.V."/>
            <person name="Sandusky M."/>
            <person name="Fuhrmann J.L."/>
            <person name="Nguyen D.T."/>
            <person name="Utterback T.R."/>
            <person name="Saudek D.M."/>
            <person name="Phillips C.A."/>
            <person name="Merrick J.M."/>
            <person name="Tomb J.-F."/>
            <person name="Dougherty B.A."/>
            <person name="Bott K.F."/>
            <person name="Hu P.-C."/>
            <person name="Lucier T.S."/>
            <person name="Peterson S.N."/>
            <person name="Smith H.O."/>
            <person name="Hutchison C.A. III"/>
            <person name="Venter J.C."/>
        </authorList>
    </citation>
    <scope>NUCLEOTIDE SEQUENCE [LARGE SCALE GENOMIC DNA]</scope>
    <source>
        <strain>ATCC 33530 / DSM 19775 / NCTC 10195 / G37</strain>
    </source>
</reference>
<organism>
    <name type="scientific">Mycoplasma genitalium (strain ATCC 33530 / DSM 19775 / NCTC 10195 / G37)</name>
    <name type="common">Mycoplasmoides genitalium</name>
    <dbReference type="NCBI Taxonomy" id="243273"/>
    <lineage>
        <taxon>Bacteria</taxon>
        <taxon>Bacillati</taxon>
        <taxon>Mycoplasmatota</taxon>
        <taxon>Mycoplasmoidales</taxon>
        <taxon>Mycoplasmoidaceae</taxon>
        <taxon>Mycoplasmoides</taxon>
    </lineage>
</organism>
<feature type="chain" id="PRO_0000175533" description="Large ribosomal subunit protein bL17">
    <location>
        <begin position="1"/>
        <end position="123"/>
    </location>
</feature>
<sequence length="123" mass="14107">MSYINKEGKTTAWRVMTVRQQVSAVLSYGKIQTTLKKAKNTQKRLEKIITIAKVDNFNNRRAVKKWLLNTNSLDVDQLTNHLFKKVAPRFLKRNGGYSRVLKLGVRRGDSTEMAILQLIDATN</sequence>
<keyword id="KW-1185">Reference proteome</keyword>
<keyword id="KW-0687">Ribonucleoprotein</keyword>
<keyword id="KW-0689">Ribosomal protein</keyword>
<dbReference type="EMBL" id="L43967">
    <property type="protein sequence ID" value="AAC71397.1"/>
    <property type="molecule type" value="Genomic_DNA"/>
</dbReference>
<dbReference type="PIR" id="G64219">
    <property type="entry name" value="G64219"/>
</dbReference>
<dbReference type="RefSeq" id="WP_010869362.1">
    <property type="nucleotide sequence ID" value="NC_000908.2"/>
</dbReference>
<dbReference type="SMR" id="P47424"/>
<dbReference type="FunCoup" id="P47424">
    <property type="interactions" value="193"/>
</dbReference>
<dbReference type="STRING" id="243273.MG_178"/>
<dbReference type="GeneID" id="88282310"/>
<dbReference type="KEGG" id="mge:MG_178"/>
<dbReference type="eggNOG" id="COG0203">
    <property type="taxonomic scope" value="Bacteria"/>
</dbReference>
<dbReference type="HOGENOM" id="CLU_074407_2_2_14"/>
<dbReference type="InParanoid" id="P47424"/>
<dbReference type="OrthoDB" id="9809073at2"/>
<dbReference type="BioCyc" id="MGEN243273:G1GJ2-202-MONOMER"/>
<dbReference type="Proteomes" id="UP000000807">
    <property type="component" value="Chromosome"/>
</dbReference>
<dbReference type="GO" id="GO:0022625">
    <property type="term" value="C:cytosolic large ribosomal subunit"/>
    <property type="evidence" value="ECO:0000318"/>
    <property type="project" value="GO_Central"/>
</dbReference>
<dbReference type="GO" id="GO:0003735">
    <property type="term" value="F:structural constituent of ribosome"/>
    <property type="evidence" value="ECO:0000318"/>
    <property type="project" value="GO_Central"/>
</dbReference>
<dbReference type="GO" id="GO:0006412">
    <property type="term" value="P:translation"/>
    <property type="evidence" value="ECO:0007669"/>
    <property type="project" value="UniProtKB-UniRule"/>
</dbReference>
<dbReference type="Gene3D" id="3.90.1030.10">
    <property type="entry name" value="Ribosomal protein L17"/>
    <property type="match status" value="1"/>
</dbReference>
<dbReference type="HAMAP" id="MF_01368">
    <property type="entry name" value="Ribosomal_bL17"/>
    <property type="match status" value="1"/>
</dbReference>
<dbReference type="InterPro" id="IPR000456">
    <property type="entry name" value="Ribosomal_bL17"/>
</dbReference>
<dbReference type="InterPro" id="IPR047859">
    <property type="entry name" value="Ribosomal_bL17_CS"/>
</dbReference>
<dbReference type="InterPro" id="IPR036373">
    <property type="entry name" value="Ribosomal_bL17_sf"/>
</dbReference>
<dbReference type="NCBIfam" id="TIGR00059">
    <property type="entry name" value="L17"/>
    <property type="match status" value="1"/>
</dbReference>
<dbReference type="PANTHER" id="PTHR14413:SF16">
    <property type="entry name" value="LARGE RIBOSOMAL SUBUNIT PROTEIN BL17M"/>
    <property type="match status" value="1"/>
</dbReference>
<dbReference type="PANTHER" id="PTHR14413">
    <property type="entry name" value="RIBOSOMAL PROTEIN L17"/>
    <property type="match status" value="1"/>
</dbReference>
<dbReference type="Pfam" id="PF01196">
    <property type="entry name" value="Ribosomal_L17"/>
    <property type="match status" value="1"/>
</dbReference>
<dbReference type="SUPFAM" id="SSF64263">
    <property type="entry name" value="Prokaryotic ribosomal protein L17"/>
    <property type="match status" value="1"/>
</dbReference>
<dbReference type="PROSITE" id="PS01167">
    <property type="entry name" value="RIBOSOMAL_L17"/>
    <property type="match status" value="1"/>
</dbReference>